<evidence type="ECO:0000250" key="1">
    <source>
        <dbReference type="UniProtKB" id="Q2LKW6"/>
    </source>
</evidence>
<evidence type="ECO:0000250" key="2">
    <source>
        <dbReference type="UniProtKB" id="Q9C000"/>
    </source>
</evidence>
<evidence type="ECO:0000255" key="3">
    <source>
        <dbReference type="PROSITE-ProRule" id="PRU00046"/>
    </source>
</evidence>
<evidence type="ECO:0000255" key="4">
    <source>
        <dbReference type="PROSITE-ProRule" id="PRU00136"/>
    </source>
</evidence>
<evidence type="ECO:0000255" key="5">
    <source>
        <dbReference type="PROSITE-ProRule" id="PRU01174"/>
    </source>
</evidence>
<evidence type="ECO:0000256" key="6">
    <source>
        <dbReference type="SAM" id="MobiDB-lite"/>
    </source>
</evidence>
<evidence type="ECO:0000269" key="7">
    <source>
    </source>
</evidence>
<evidence type="ECO:0000269" key="8">
    <source>
    </source>
</evidence>
<evidence type="ECO:0000269" key="9">
    <source>
    </source>
</evidence>
<evidence type="ECO:0000303" key="10">
    <source>
    </source>
</evidence>
<evidence type="ECO:0000305" key="11"/>
<evidence type="ECO:0000305" key="12">
    <source>
    </source>
</evidence>
<evidence type="ECO:0000305" key="13">
    <source>
    </source>
</evidence>
<evidence type="ECO:0000312" key="14">
    <source>
        <dbReference type="MGI" id="MGI:2684861"/>
    </source>
</evidence>
<accession>Q2LKU9</accession>
<accession>M4T3K8</accession>
<accession>M4T4C8</accession>
<accession>M4T632</accession>
<accession>M4TJP5</accession>
<accession>Q3U0B5</accession>
<accession>Q67EY4</accession>
<protein>
    <recommendedName>
        <fullName>NACHT, LRR and PYD domains-containing protein 1a</fullName>
        <ecNumber evidence="2">3.4.-.-</ecNumber>
    </recommendedName>
    <alternativeName>
        <fullName>Caspase recruitment domain-containing protein 7</fullName>
    </alternativeName>
    <alternativeName>
        <fullName>Death effector filament-forming ced-4-like apoptosis protein</fullName>
    </alternativeName>
    <alternativeName>
        <fullName>Nucleotide-binding domain and caspase recruitment domain</fullName>
    </alternativeName>
    <component>
        <recommendedName>
            <fullName evidence="11">NACHT, LRR and PYD domains-containing protein 1a, C-terminus</fullName>
            <shortName evidence="2">Nlrp1a-CT</shortName>
        </recommendedName>
    </component>
    <component>
        <recommendedName>
            <fullName evidence="11">NACHT, LRR and PYD domains-containing protein 1a, N-terminus</fullName>
            <shortName evidence="2">Nlrp1a-NT</shortName>
        </recommendedName>
    </component>
</protein>
<comment type="function">
    <text evidence="2 7">Acts as the sensor component of the Nlrp1a inflammasome, which mediates inflammasome activation in response to various pathogen-associated signals, leading to subsequent pyroptosis (PubMed:23219391). Inflammasomes are supramolecular complexes that assemble in the cytosol in response to pathogens and other damage-associated signals and play critical roles in innate immunity and inflammation (By similarity). Acts as a recognition receptor (PRR): recognizes specific pathogens and other damage-associated signals, and mediates the formation of the inflammasome polymeric complex (By similarity). In response to pathogen-associated signals, the N-terminal part of Nlrp1a is degraded by the proteasome, releasing the cleaved C-terminal part of the protein (NACHT, LRR and PYD domains-containing protein 1a, C-terminus), which polymerizes to initiate the formation of the inflammasome complex: the inflammasome recruits pro-caspase-1 (proCASP1) and promotes caspase-1 (CASP1) activation, which subsequently cleaves and activates inflammatory cytokines IL1B and IL18 and gasdermin-D (GSDMD), leading to pyroptosis (By similarity). In the absence of GSDMD expression, the Nlrp1a inflammasome is able to recruit and activate CASP8, leading to activation of gasdermin-E (GSDME) (By similarity). Activation of Nlrp1a inflammasome is also required for HMGB1 secretion; the active cytokines and HMGB1 stimulate inflammatory responses (By similarity). When activated in the bone marrow, induces the pyroptosis of hematopoietic stem cells and progenitor cells of both myeloid and lymphoid lineages, hence allowing the removal of damaged cells, and the release of IL1B, which induces granulopoiesis (PubMed:23219391).</text>
</comment>
<comment type="function">
    <molecule>NACHT, LRR and PYD domains-containing protein 1a</molecule>
    <text evidence="2">Constitutes the precursor of the Nlrp1a inflammasome, which mediates autoproteolytic processing within the FIIND domain to generate the N-terminal and C-terminal parts, which are associated non-covalently in absence of pathogens and other damage-associated signals.</text>
</comment>
<comment type="function">
    <molecule>NACHT, LRR and PYD domains-containing protein 1a, N-terminus</molecule>
    <text evidence="2">Regulatory part that prevents formation of the Nlrp1a inflammasome: in absence of pathogens and other damage-associated signals, interacts with the C-terminal part of Nlrp1a (NACHT, LRR and PYD domains-containing protein 1a, C-terminus), preventing activation of the Nlrp1a inflammasome (By similarity). In response to pathogen-associated signals, this part is ubiquitinated and degraded by the proteasome, releasing the cleaved C-terminal part of the protein, which polymerizes and forms the Nlrp1a inflammasome (By similarity).</text>
</comment>
<comment type="function">
    <molecule>NACHT, LRR and PYD domains-containing protein 1a, C-terminus</molecule>
    <text evidence="2">Constitutes the active part of the Nlrp1a inflammasome (By similarity). In absence of pathogens and other damage-associated signals, interacts with the N-terminal part of Nlrp1a (NACHT, LRR and PYD domains-containing protein 1a, N-terminus), preventing activation of the Nlrp1a inflammasome (By similarity). In response to pathogen-associated signals, the N-terminal part of Nlrp1a is degraded by the proteasome, releasing this form, which polymerizes to form the Nlrp1a inflammasome complex: the Nlrp1a inflammasome complex then directly recruits pro-caspase-1 (proCASP1) and promotes caspase-1 (CASP1) activation, leading to gasdermin-D (GSDMD) cleavage and subsequent pyroptosis (By similarity).</text>
</comment>
<comment type="activity regulation">
    <text evidence="1 2 9">Nlrp1a inflammasome is activated by pathogens and other damage-associated signals: activation promotes ubiquitination and degradation of the N-terminal part, releasing the cleaved C-terminal part of the protein (NACHT, LRR and PYD domains-containing protein 1a, C-terminus), which polymerizes and forms the Nlrp1a inflammasome (By similarity). Nlrp1a inflammasome is inhibited by DPP8 and DPP9, which sequester the C-terminal fragment of Nlrp1a (NACHT, LRR and PYD domains-containing protein 1a, C-terminus) in a ternary complex, thereby preventing Nlrp1a oligomerization and activation (By similarity). Nlrp1a inflammasome is activated by Val-boroPro (Talabostat, PT-100), an inhibitor of dipeptidyl peptidases DPP8 and DPP9 (PubMed:31383852). Val-boroPro relieves inhibition of DPP8 and/or DPP9 by promoting disruption of the ternary complex, releasing its C-terminal part from autoinhibition (By similarity).</text>
</comment>
<comment type="subunit">
    <text evidence="2">Interacts (via LRR repeats) with BCL2 and BCL2L1 (via the loop between motifs BH4 and BH3) (By similarity). Interacts with NOD2; this interaction is enhanced in the presence of muramyl dipeptide (MDP) and increases IL1B release (By similarity). Interacts with EIF2AK2/PKR; this interaction requires EIF2AK2 activity, is accompanied by EIF2AK2 autophosphorylation and promotes inflammasome assembly in response to danger-associated signals (By similarity). Interacts with MEFV; this interaction targets Nlrp1a to degradation by autophagy, hence preventing excessive IL1B- and IL18-mediated inflammation (By similarity). Interacts with DPP9; leading to inhibit activation of the inflammasome (By similarity). DPP9 acts via formation of a ternary complex, composed of a DPP9 homodimer, one full-length Nlrp1a protein, and one cleaved C-terminus of Nlrp1a (NACHT, LRR and PYD domains-containing protein 1a, C-terminus) (By similarity). Interacts with DPP8; leading to inhibit activation of the inflammasome, probably via formation of a ternary complex with DPP8 (By similarity).</text>
</comment>
<comment type="subunit">
    <molecule>NACHT, LRR and PYD domains-containing protein 1a, N-terminus</molecule>
    <text evidence="2">Interacts with the C-terminal part of Nlrp1a (NACHT, LRR and PYD domains-containing protein 1a, C-terminus) in absence of pathogens and other damage-associated signals.</text>
</comment>
<comment type="subunit">
    <molecule>NACHT, LRR and PYD domains-containing protein 1a, C-terminus</molecule>
    <text evidence="2">Interacts with the N-terminal part of Nlrp1a (NACHT, LRR and PYD domains-containing protein 1a, N-terminus) in absence of pathogens and other damage-associated signals (By similarity). Homomultimer; forms the Nlrp1a inflammasome polymeric complex, a filament composed of homopolymers of this form in response to pathogens and other damage-associated signals (By similarity). Interacts (via CARD domain) with CASP1 (via CARD domain); leading to CASP1 activation (By similarity).</text>
</comment>
<comment type="subcellular location">
    <subcellularLocation>
        <location evidence="2">Cytoplasm</location>
        <location evidence="2">Cytosol</location>
    </subcellularLocation>
    <subcellularLocation>
        <location evidence="2">Cytoplasm</location>
    </subcellularLocation>
    <subcellularLocation>
        <location evidence="2">Nucleus</location>
    </subcellularLocation>
    <text evidence="2">Nucleocytoplasmic distribution in lymphoid organs (probably in T-cells) and in neurons. In epithelial cells, predominantly cytoplasmic.</text>
</comment>
<comment type="subcellular location">
    <molecule>NACHT, LRR and PYD domains-containing protein 1a, C-terminus</molecule>
    <subcellularLocation>
        <location evidence="2">Inflammasome</location>
    </subcellularLocation>
</comment>
<comment type="alternative products">
    <event type="alternative splicing"/>
    <isoform>
        <id>Q2LKU9-1</id>
        <name>1</name>
        <sequence type="displayed"/>
    </isoform>
    <isoform>
        <id>Q2LKU9-2</id>
        <name>2</name>
        <sequence type="described" ref="VSP_058002 VSP_058003 VSP_058004"/>
    </isoform>
</comment>
<comment type="tissue specificity">
    <text evidence="7 8">Highly expressed in hematopoietic stem cells and progenitor cells of both myeloid and lymphoid origin (PubMed:23219391). The expression is highly strain-dependent. Not expressed in Balb/cJ animals, but widely expressed in C57BL/6J. Expressed in macrophages resistant to Bacillus anthracis lethal toxin, but not in toxin-sensitive macrophages, except in CAST/EiJ strain (PubMed:23506131).</text>
</comment>
<comment type="domain">
    <text evidence="1">The leucine-rich repeat (LRR) domain may be involved in autoinhibition in the absence of activating signal, possibly through intramolecular interaction with the NACHT domain.</text>
</comment>
<comment type="domain">
    <text evidence="1">The FIIND (domain with function to find) region is involved in homomerization, but not in CASP1-binding. Autocatalytic cleavage in this region occurs constitutively, prior to activation signals, and is required for inflammasome activity (IL1B release), possibly by facilitating CASP1 binding. Both N- and C-terminal fragments remain associated.</text>
</comment>
<comment type="domain">
    <molecule>NACHT, LRR and PYD domains-containing protein 1a, C-terminus</molecule>
    <text evidence="2">The C-terminal part of Nlrp1a oligomerizes to form the core of the Nlrp1a inflammasome filament: in the filament, the CARD domains form a central helical filaments that are promoted by oligomerized, but flexibly linked, UPA regions surrounding the filaments. The UPA region reduces the threshold needed for filament formation and signaling.</text>
</comment>
<comment type="PTM">
    <molecule>NACHT, LRR and PYD domains-containing protein 1a</molecule>
    <text evidence="13">Autocatalytically cleaved. Autocatalytic cleavage in FIIND region occurs constitutively, prior to activation signals, and is required for inflammasome activity (IL1B release), possibly by facilitating CASP1 binding. Both N- and C-terminal parts remain associated non-covalently.</text>
</comment>
<comment type="PTM">
    <molecule>NACHT, LRR and PYD domains-containing protein 1a, N-terminus</molecule>
    <text evidence="2">Ubiquitinated in response to pathogen-associated signals, leading to its degradation by the proteasome and subsequent release of the cleaved C-terminal part of the protein (NACHT, LRR and PYD domains-containing protein 1a, C-terminus), which polymerizes and forms the Nlrp1a inflammasome.</text>
</comment>
<comment type="miscellaneous">
    <text evidence="8 12">Three tandem Nrlp1 paralogs, Nrlp1a, Nrlp1b and Nrlp1c, are present in at least 2 strains, C57BL/6J and 129S1/SvImJ. Nlrp1c is predicted to be a pseudogene. Nlrp1b is the primary mediator of macrophage susceptibility to Bacillus anthracis lethal toxin (LT). Neither Nlrp1a, nor Nrlp1c are expressed in anthrax lethal toxin susceptible strains, hence neither of them is thought to play an important role in this phenotype.</text>
</comment>
<comment type="similarity">
    <text evidence="11">Belongs to the NLRP family.</text>
</comment>
<dbReference type="EC" id="3.4.-.-" evidence="2"/>
<dbReference type="EMBL" id="DQ117601">
    <property type="protein sequence ID" value="AAZ40527.1"/>
    <property type="molecule type" value="mRNA"/>
</dbReference>
<dbReference type="EMBL" id="KC539856">
    <property type="protein sequence ID" value="AGH68332.1"/>
    <property type="molecule type" value="mRNA"/>
</dbReference>
<dbReference type="EMBL" id="KC539857">
    <property type="protein sequence ID" value="AGH68333.1"/>
    <property type="molecule type" value="mRNA"/>
</dbReference>
<dbReference type="EMBL" id="KC539858">
    <property type="protein sequence ID" value="AGH68334.1"/>
    <property type="molecule type" value="mRNA"/>
</dbReference>
<dbReference type="EMBL" id="KC539859">
    <property type="protein sequence ID" value="AGH68335.1"/>
    <property type="molecule type" value="mRNA"/>
</dbReference>
<dbReference type="EMBL" id="KC539860">
    <property type="protein sequence ID" value="AGH68336.1"/>
    <property type="molecule type" value="mRNA"/>
</dbReference>
<dbReference type="EMBL" id="KC539861">
    <property type="protein sequence ID" value="AGH68337.1"/>
    <property type="molecule type" value="mRNA"/>
</dbReference>
<dbReference type="EMBL" id="AY355339">
    <property type="protein sequence ID" value="AAR14736.1"/>
    <property type="molecule type" value="mRNA"/>
</dbReference>
<dbReference type="EMBL" id="AL596136">
    <property type="status" value="NOT_ANNOTATED_CDS"/>
    <property type="molecule type" value="Genomic_DNA"/>
</dbReference>
<dbReference type="EMBL" id="AL662908">
    <property type="status" value="NOT_ANNOTATED_CDS"/>
    <property type="molecule type" value="Genomic_DNA"/>
</dbReference>
<dbReference type="EMBL" id="AK157034">
    <property type="protein sequence ID" value="BAE33940.1"/>
    <property type="molecule type" value="mRNA"/>
</dbReference>
<dbReference type="CCDS" id="CCDS48838.1">
    <molecule id="Q2LKU9-1"/>
</dbReference>
<dbReference type="RefSeq" id="NP_001004142.2">
    <molecule id="Q2LKU9-1"/>
    <property type="nucleotide sequence ID" value="NM_001004142.2"/>
</dbReference>
<dbReference type="RefSeq" id="XP_017169843.1">
    <molecule id="Q2LKU9-1"/>
    <property type="nucleotide sequence ID" value="XM_017314354.3"/>
</dbReference>
<dbReference type="RefSeq" id="XP_017169844.1">
    <property type="nucleotide sequence ID" value="XM_017314355.1"/>
</dbReference>
<dbReference type="RefSeq" id="XP_036012351.1">
    <molecule id="Q2LKU9-1"/>
    <property type="nucleotide sequence ID" value="XM_036156458.1"/>
</dbReference>
<dbReference type="RefSeq" id="XP_036012352.1">
    <molecule id="Q2LKU9-1"/>
    <property type="nucleotide sequence ID" value="XM_036156459.1"/>
</dbReference>
<dbReference type="SMR" id="Q2LKU9"/>
<dbReference type="ComplexPortal" id="CPX-4271">
    <property type="entry name" value="NLRP1a inflammasome"/>
</dbReference>
<dbReference type="FunCoup" id="Q2LKU9">
    <property type="interactions" value="597"/>
</dbReference>
<dbReference type="STRING" id="10090.ENSMUSP00000104158"/>
<dbReference type="MEROPS" id="S79.A02"/>
<dbReference type="GlyGen" id="Q2LKU9">
    <property type="glycosylation" value="1 site, 1 O-linked glycan (1 site)"/>
</dbReference>
<dbReference type="iPTMnet" id="Q2LKU9"/>
<dbReference type="PhosphoSitePlus" id="Q2LKU9"/>
<dbReference type="PaxDb" id="10090-ENSMUSP00000104158"/>
<dbReference type="ProteomicsDB" id="252904">
    <molecule id="Q2LKU9-1"/>
</dbReference>
<dbReference type="ProteomicsDB" id="252905">
    <molecule id="Q2LKU9-2"/>
</dbReference>
<dbReference type="Ensembl" id="ENSMUST00000048514.11">
    <molecule id="Q2LKU9-2"/>
    <property type="protein sequence ID" value="ENSMUSP00000038186.5"/>
    <property type="gene ID" value="ENSMUSG00000069830.11"/>
</dbReference>
<dbReference type="Ensembl" id="ENSMUST00000108518.3">
    <molecule id="Q2LKU9-1"/>
    <property type="protein sequence ID" value="ENSMUSP00000104158.3"/>
    <property type="gene ID" value="ENSMUSG00000069830.11"/>
</dbReference>
<dbReference type="GeneID" id="195046"/>
<dbReference type="KEGG" id="mmu:195046"/>
<dbReference type="UCSC" id="uc007jxq.2">
    <molecule id="Q2LKU9-1"/>
    <property type="organism name" value="mouse"/>
</dbReference>
<dbReference type="UCSC" id="uc011xyf.1">
    <property type="organism name" value="mouse"/>
</dbReference>
<dbReference type="AGR" id="MGI:2684861"/>
<dbReference type="CTD" id="195046"/>
<dbReference type="MGI" id="MGI:2684861">
    <property type="gene designation" value="Nlrp1a"/>
</dbReference>
<dbReference type="VEuPathDB" id="HostDB:ENSMUSG00000069830"/>
<dbReference type="eggNOG" id="ENOG502S4A4">
    <property type="taxonomic scope" value="Eukaryota"/>
</dbReference>
<dbReference type="GeneTree" id="ENSGT00940000162176"/>
<dbReference type="HOGENOM" id="CLU_002274_2_4_1"/>
<dbReference type="InParanoid" id="Q2LKU9"/>
<dbReference type="OMA" id="SWMVCTC"/>
<dbReference type="OrthoDB" id="428577at2759"/>
<dbReference type="TreeFam" id="TF340267"/>
<dbReference type="Reactome" id="R-MMU-844455">
    <property type="pathway name" value="The NLRP1 inflammasome"/>
</dbReference>
<dbReference type="BioGRID-ORCS" id="195046">
    <property type="hits" value="1 hit in 76 CRISPR screens"/>
</dbReference>
<dbReference type="ChiTaRS" id="Nlrp1a">
    <property type="organism name" value="mouse"/>
</dbReference>
<dbReference type="PRO" id="PR:Q2LKU9"/>
<dbReference type="Proteomes" id="UP000000589">
    <property type="component" value="Chromosome 11"/>
</dbReference>
<dbReference type="RNAct" id="Q2LKU9">
    <property type="molecule type" value="protein"/>
</dbReference>
<dbReference type="Bgee" id="ENSMUSG00000069830">
    <property type="expression patterns" value="Expressed in granulocyte and 13 other cell types or tissues"/>
</dbReference>
<dbReference type="GO" id="GO:0005737">
    <property type="term" value="C:cytoplasm"/>
    <property type="evidence" value="ECO:0000303"/>
    <property type="project" value="ComplexPortal"/>
</dbReference>
<dbReference type="GO" id="GO:0072558">
    <property type="term" value="C:NLRP1 inflammasome complex"/>
    <property type="evidence" value="ECO:0000250"/>
    <property type="project" value="UniProtKB"/>
</dbReference>
<dbReference type="GO" id="GO:0005634">
    <property type="term" value="C:nucleus"/>
    <property type="evidence" value="ECO:0000250"/>
    <property type="project" value="BHF-UCL"/>
</dbReference>
<dbReference type="GO" id="GO:0005524">
    <property type="term" value="F:ATP binding"/>
    <property type="evidence" value="ECO:0000250"/>
    <property type="project" value="HGNC-UCL"/>
</dbReference>
<dbReference type="GO" id="GO:0140608">
    <property type="term" value="F:cysteine-type endopeptidase activator activity"/>
    <property type="evidence" value="ECO:0000250"/>
    <property type="project" value="UniProtKB"/>
</dbReference>
<dbReference type="GO" id="GO:0019899">
    <property type="term" value="F:enzyme binding"/>
    <property type="evidence" value="ECO:0000250"/>
    <property type="project" value="HGNC-UCL"/>
</dbReference>
<dbReference type="GO" id="GO:0008233">
    <property type="term" value="F:peptidase activity"/>
    <property type="evidence" value="ECO:0007669"/>
    <property type="project" value="UniProtKB-KW"/>
</dbReference>
<dbReference type="GO" id="GO:0042742">
    <property type="term" value="P:defense response to bacterium"/>
    <property type="evidence" value="ECO:0000314"/>
    <property type="project" value="MGI"/>
</dbReference>
<dbReference type="GO" id="GO:0045087">
    <property type="term" value="P:innate immune response"/>
    <property type="evidence" value="ECO:0007669"/>
    <property type="project" value="UniProtKB-KW"/>
</dbReference>
<dbReference type="GO" id="GO:0051402">
    <property type="term" value="P:neuron apoptotic process"/>
    <property type="evidence" value="ECO:0000250"/>
    <property type="project" value="HGNC-UCL"/>
</dbReference>
<dbReference type="GO" id="GO:0002221">
    <property type="term" value="P:pattern recognition receptor signaling pathway"/>
    <property type="evidence" value="ECO:0000303"/>
    <property type="project" value="ComplexPortal"/>
</dbReference>
<dbReference type="GO" id="GO:0050729">
    <property type="term" value="P:positive regulation of inflammatory response"/>
    <property type="evidence" value="ECO:0000303"/>
    <property type="project" value="ComplexPortal"/>
</dbReference>
<dbReference type="GO" id="GO:0032731">
    <property type="term" value="P:positive regulation of interleukin-1 beta production"/>
    <property type="evidence" value="ECO:0000314"/>
    <property type="project" value="BHF-UCL"/>
</dbReference>
<dbReference type="GO" id="GO:0097300">
    <property type="term" value="P:programmed necrotic cell death"/>
    <property type="evidence" value="ECO:0000314"/>
    <property type="project" value="MGI"/>
</dbReference>
<dbReference type="GO" id="GO:0051260">
    <property type="term" value="P:protein homooligomerization"/>
    <property type="evidence" value="ECO:0000250"/>
    <property type="project" value="UniProtKB"/>
</dbReference>
<dbReference type="GO" id="GO:0006508">
    <property type="term" value="P:proteolysis"/>
    <property type="evidence" value="ECO:0007669"/>
    <property type="project" value="UniProtKB-KW"/>
</dbReference>
<dbReference type="GO" id="GO:0070269">
    <property type="term" value="P:pyroptotic inflammatory response"/>
    <property type="evidence" value="ECO:0000303"/>
    <property type="project" value="ComplexPortal"/>
</dbReference>
<dbReference type="GO" id="GO:0042981">
    <property type="term" value="P:regulation of apoptotic process"/>
    <property type="evidence" value="ECO:0007669"/>
    <property type="project" value="InterPro"/>
</dbReference>
<dbReference type="GO" id="GO:0032495">
    <property type="term" value="P:response to muramyl dipeptide"/>
    <property type="evidence" value="ECO:0000314"/>
    <property type="project" value="BHF-UCL"/>
</dbReference>
<dbReference type="CDD" id="cd08330">
    <property type="entry name" value="CARD_ASC_NALP1"/>
    <property type="match status" value="1"/>
</dbReference>
<dbReference type="FunFam" id="1.10.533.10:FF:000013">
    <property type="entry name" value="Apoptosis-associated speck-like protein containing a CARD"/>
    <property type="match status" value="1"/>
</dbReference>
<dbReference type="FunFam" id="3.40.50.300:FF:000897">
    <property type="entry name" value="NLR family pyrin domain containing 1"/>
    <property type="match status" value="1"/>
</dbReference>
<dbReference type="FunFam" id="3.80.10.10:FF:000622">
    <property type="entry name" value="NLR family, pyrin domain containing 1B, PWK/PhJ specific, allele 1"/>
    <property type="match status" value="1"/>
</dbReference>
<dbReference type="Gene3D" id="1.10.533.10">
    <property type="entry name" value="Death Domain, Fas"/>
    <property type="match status" value="1"/>
</dbReference>
<dbReference type="Gene3D" id="3.40.50.300">
    <property type="entry name" value="P-loop containing nucleotide triphosphate hydrolases"/>
    <property type="match status" value="1"/>
</dbReference>
<dbReference type="Gene3D" id="3.80.10.10">
    <property type="entry name" value="Ribonuclease Inhibitor"/>
    <property type="match status" value="1"/>
</dbReference>
<dbReference type="InterPro" id="IPR001315">
    <property type="entry name" value="CARD"/>
</dbReference>
<dbReference type="InterPro" id="IPR033516">
    <property type="entry name" value="CARD8/ASC/NALP1_CARD"/>
</dbReference>
<dbReference type="InterPro" id="IPR011029">
    <property type="entry name" value="DEATH-like_dom_sf"/>
</dbReference>
<dbReference type="InterPro" id="IPR025307">
    <property type="entry name" value="FIIND_dom"/>
</dbReference>
<dbReference type="InterPro" id="IPR001611">
    <property type="entry name" value="Leu-rich_rpt"/>
</dbReference>
<dbReference type="InterPro" id="IPR032675">
    <property type="entry name" value="LRR_dom_sf"/>
</dbReference>
<dbReference type="InterPro" id="IPR007111">
    <property type="entry name" value="NACHT_NTPase"/>
</dbReference>
<dbReference type="InterPro" id="IPR041267">
    <property type="entry name" value="NLRP_HD2"/>
</dbReference>
<dbReference type="InterPro" id="IPR051249">
    <property type="entry name" value="NLRP_Inflammasome"/>
</dbReference>
<dbReference type="InterPro" id="IPR041075">
    <property type="entry name" value="NOD1/2_WH"/>
</dbReference>
<dbReference type="InterPro" id="IPR027417">
    <property type="entry name" value="P-loop_NTPase"/>
</dbReference>
<dbReference type="PANTHER" id="PTHR46985">
    <property type="entry name" value="NACHT, LRR AND PYD DOMAINS-CONTAINING PROTEIN 1"/>
    <property type="match status" value="1"/>
</dbReference>
<dbReference type="PANTHER" id="PTHR46985:SF3">
    <property type="entry name" value="NACHT, LRR AND PYD DOMAINS-CONTAINING PROTEIN 1"/>
    <property type="match status" value="1"/>
</dbReference>
<dbReference type="Pfam" id="PF00619">
    <property type="entry name" value="CARD"/>
    <property type="match status" value="1"/>
</dbReference>
<dbReference type="Pfam" id="PF13553">
    <property type="entry name" value="FIIND"/>
    <property type="match status" value="1"/>
</dbReference>
<dbReference type="Pfam" id="PF13516">
    <property type="entry name" value="LRR_6"/>
    <property type="match status" value="1"/>
</dbReference>
<dbReference type="Pfam" id="PF05729">
    <property type="entry name" value="NACHT"/>
    <property type="match status" value="1"/>
</dbReference>
<dbReference type="Pfam" id="PF17776">
    <property type="entry name" value="NLRC4_HD2"/>
    <property type="match status" value="1"/>
</dbReference>
<dbReference type="Pfam" id="PF17779">
    <property type="entry name" value="NOD2_WH"/>
    <property type="match status" value="1"/>
</dbReference>
<dbReference type="Pfam" id="PF23679">
    <property type="entry name" value="UPA-FIIND"/>
    <property type="match status" value="1"/>
</dbReference>
<dbReference type="SMART" id="SM00368">
    <property type="entry name" value="LRR_RI"/>
    <property type="match status" value="3"/>
</dbReference>
<dbReference type="SUPFAM" id="SSF47986">
    <property type="entry name" value="DEATH domain"/>
    <property type="match status" value="1"/>
</dbReference>
<dbReference type="SUPFAM" id="SSF52540">
    <property type="entry name" value="P-loop containing nucleoside triphosphate hydrolases"/>
    <property type="match status" value="1"/>
</dbReference>
<dbReference type="SUPFAM" id="SSF52047">
    <property type="entry name" value="RNI-like"/>
    <property type="match status" value="1"/>
</dbReference>
<dbReference type="PROSITE" id="PS50209">
    <property type="entry name" value="CARD"/>
    <property type="match status" value="1"/>
</dbReference>
<dbReference type="PROSITE" id="PS51830">
    <property type="entry name" value="FIIND"/>
    <property type="match status" value="1"/>
</dbReference>
<dbReference type="PROSITE" id="PS51450">
    <property type="entry name" value="LRR"/>
    <property type="match status" value="3"/>
</dbReference>
<dbReference type="PROSITE" id="PS50837">
    <property type="entry name" value="NACHT"/>
    <property type="match status" value="1"/>
</dbReference>
<organism>
    <name type="scientific">Mus musculus</name>
    <name type="common">Mouse</name>
    <dbReference type="NCBI Taxonomy" id="10090"/>
    <lineage>
        <taxon>Eukaryota</taxon>
        <taxon>Metazoa</taxon>
        <taxon>Chordata</taxon>
        <taxon>Craniata</taxon>
        <taxon>Vertebrata</taxon>
        <taxon>Euteleostomi</taxon>
        <taxon>Mammalia</taxon>
        <taxon>Eutheria</taxon>
        <taxon>Euarchontoglires</taxon>
        <taxon>Glires</taxon>
        <taxon>Rodentia</taxon>
        <taxon>Myomorpha</taxon>
        <taxon>Muroidea</taxon>
        <taxon>Muridae</taxon>
        <taxon>Murinae</taxon>
        <taxon>Mus</taxon>
        <taxon>Mus</taxon>
    </lineage>
</organism>
<sequence>MEESQSKQESSTKVAQHEGQEDVDPTFKTKKLMEVELMKHRVQLERNLKLRTFPGARTKQVKEALYPLLTWSSKSKNLFQNFTKLLLFKKLCQRGSENLVRESWYPCVPEEEAHMIDIQDLFGPNLGTQKKPQLVIIEGAAGIGKSTLARLVKRAWKEGKLYRNDFHHVFFFSCRELAQYEQLSLAELIVQGQEVPTAPIRQILSHPEKLLFILDGIDEPAWVLADQNPELCLHWSQTQPVHTLLGSLLGKSILPGASFLLTTRTTALQKFIPSLEQPCQVEVLGFTLFERKNYFYKYFGKKKGGVTTFTLVKSNSALLTLCEVPWVCWLVCTCLKKQMEQGGELSLTSQTTTALCLKYLSLTIPGQHMRTQLRDLCSLAAEGVCQRRTLFSESDLCKQGLDEHAIASFLKIGVLQKQASSLSYSFAHLCLQEFFAAMSYILDDSEERHADMKNDRIVETLVERYGRQNLFEAPTVRFLFGLLSKEELKKIEKLFSCSLHGKTKLKLLWHILGKSQPHQPPCLGLLHCLYENQDMELLTHVMHDLQGTIVPGPDDLAHTVLQTNVKHLVIQTDMDLMVVTFCIKFCCHVRSLQLNRKVQQGHKFTAPGMVLYRWTPITDASWKIFFSNLKLARNLEELDLSGNPLSYYAVHSLCTTLRKRGCQLKTLWLVECGLTSTYCSLLASVLSARSSLTELDLQLNDLGDGGVKMLCEGLRNPACNLSILWLDQASLSDQVIAELRTLEAKNPKLLISSTWKPHVMVPTMNMDKEEVGDSQALLKQQRQQSGDKHMEPLGTEDEFWGPTGPVTTEVVDRERNLYRVQLPMAGSYHCPSTGLHFVVTRAVTIEIEFCAWSQYLDKTPLQQSHMVVGPLFDIKAEQGAVTAVYLPHFVALQEGIVDSSLFHVAHFQEHGMVLETPARVEQHYAVLENPSFSPMGILLRMIPAVGHFIPITSTTLIYYHLYLEDVTFHLYLVPNDCSIRKAIDDEEMKFQFVRINKPPPVDALYLGSRYIVSSSKLVEIIPKELELCYRSPGESQLFSEIDIGHMDSEIKLQIKDKRHMNLKWEALLKPGDLRPALPKIATAPKDAPSLLHFMDQHREQLVARVTSVDPLLDKLHGLVLSEDSYEVVRSETTNQDKMRKLFSLSRSWSWDCKDQFYQALKETHPHLVMDILEKLGGVSVKS</sequence>
<name>NLR1A_MOUSE</name>
<gene>
    <name evidence="14" type="primary">Nlrp1a</name>
    <name type="synonym">Card7</name>
    <name type="synonym">Nalp1</name>
    <name evidence="10" type="synonym">Nalp1a</name>
    <name type="synonym">Nlrp1</name>
</gene>
<reference key="1">
    <citation type="journal article" date="2006" name="Nat. Genet.">
        <title>Nalp1b controls mouse macrophage susceptibility to anthrax lethal toxin.</title>
        <authorList>
            <person name="Boyden E.D."/>
            <person name="Dietrich W.F."/>
        </authorList>
    </citation>
    <scope>NUCLEOTIDE SEQUENCE [MRNA] (ISOFORM 1)</scope>
    <source>
        <strain>C57BL/6J</strain>
    </source>
</reference>
<reference key="2">
    <citation type="journal article" date="2013" name="BMC Genomics">
        <title>Transcriptional analysis of the three Nlrp1 paralogs in mice.</title>
        <authorList>
            <person name="Sastalla I."/>
            <person name="Crown D."/>
            <person name="Masters S.L."/>
            <person name="McKenzie A."/>
            <person name="Leppla S.H."/>
            <person name="Moayeri M."/>
        </authorList>
    </citation>
    <scope>NUCLEOTIDE SEQUENCE [MRNA] (ISOFORM 1)</scope>
    <scope>VARIANTS LYS-3; TYR-88; GLY-112; ARG-227; GLU-256; GLN-291; ASN-337; GLY-484; MET-541; HIS-660; ILE-664; ASP-705; ASN-857; SER-975; GLN-1030; PHE-1043; SER-1110 AND ARG-1181</scope>
    <scope>TISSUE SPECIFICITY</scope>
    <source>
        <strain>A/J</strain>
        <strain>AKR/J</strain>
        <strain>CAST/EiJ</strain>
        <strain>DBA/2J</strain>
        <strain>I/LnJ</strain>
        <strain>PWK/PhJ</strain>
    </source>
</reference>
<reference key="3">
    <citation type="submission" date="2003-07" db="EMBL/GenBank/DDBJ databases">
        <title>Murine NALPs: a family of proteins involved in inflammation.</title>
        <authorList>
            <person name="Martinon F."/>
            <person name="Hofmann K."/>
            <person name="Tschopp J."/>
        </authorList>
    </citation>
    <scope>NUCLEOTIDE SEQUENCE [MRNA] (ISOFORM 2)</scope>
    <source>
        <strain>C57BL/6J</strain>
    </source>
</reference>
<reference key="4">
    <citation type="journal article" date="2009" name="PLoS Biol.">
        <title>Lineage-specific biology revealed by a finished genome assembly of the mouse.</title>
        <authorList>
            <person name="Church D.M."/>
            <person name="Goodstadt L."/>
            <person name="Hillier L.W."/>
            <person name="Zody M.C."/>
            <person name="Goldstein S."/>
            <person name="She X."/>
            <person name="Bult C.J."/>
            <person name="Agarwala R."/>
            <person name="Cherry J.L."/>
            <person name="DiCuccio M."/>
            <person name="Hlavina W."/>
            <person name="Kapustin Y."/>
            <person name="Meric P."/>
            <person name="Maglott D."/>
            <person name="Birtle Z."/>
            <person name="Marques A.C."/>
            <person name="Graves T."/>
            <person name="Zhou S."/>
            <person name="Teague B."/>
            <person name="Potamousis K."/>
            <person name="Churas C."/>
            <person name="Place M."/>
            <person name="Herschleb J."/>
            <person name="Runnheim R."/>
            <person name="Forrest D."/>
            <person name="Amos-Landgraf J."/>
            <person name="Schwartz D.C."/>
            <person name="Cheng Z."/>
            <person name="Lindblad-Toh K."/>
            <person name="Eichler E.E."/>
            <person name="Ponting C.P."/>
        </authorList>
    </citation>
    <scope>NUCLEOTIDE SEQUENCE [LARGE SCALE GENOMIC DNA]</scope>
    <source>
        <strain>C57BL/6J</strain>
    </source>
</reference>
<reference key="5">
    <citation type="journal article" date="2005" name="Science">
        <title>The transcriptional landscape of the mammalian genome.</title>
        <authorList>
            <person name="Carninci P."/>
            <person name="Kasukawa T."/>
            <person name="Katayama S."/>
            <person name="Gough J."/>
            <person name="Frith M.C."/>
            <person name="Maeda N."/>
            <person name="Oyama R."/>
            <person name="Ravasi T."/>
            <person name="Lenhard B."/>
            <person name="Wells C."/>
            <person name="Kodzius R."/>
            <person name="Shimokawa K."/>
            <person name="Bajic V.B."/>
            <person name="Brenner S.E."/>
            <person name="Batalov S."/>
            <person name="Forrest A.R."/>
            <person name="Zavolan M."/>
            <person name="Davis M.J."/>
            <person name="Wilming L.G."/>
            <person name="Aidinis V."/>
            <person name="Allen J.E."/>
            <person name="Ambesi-Impiombato A."/>
            <person name="Apweiler R."/>
            <person name="Aturaliya R.N."/>
            <person name="Bailey T.L."/>
            <person name="Bansal M."/>
            <person name="Baxter L."/>
            <person name="Beisel K.W."/>
            <person name="Bersano T."/>
            <person name="Bono H."/>
            <person name="Chalk A.M."/>
            <person name="Chiu K.P."/>
            <person name="Choudhary V."/>
            <person name="Christoffels A."/>
            <person name="Clutterbuck D.R."/>
            <person name="Crowe M.L."/>
            <person name="Dalla E."/>
            <person name="Dalrymple B.P."/>
            <person name="de Bono B."/>
            <person name="Della Gatta G."/>
            <person name="di Bernardo D."/>
            <person name="Down T."/>
            <person name="Engstrom P."/>
            <person name="Fagiolini M."/>
            <person name="Faulkner G."/>
            <person name="Fletcher C.F."/>
            <person name="Fukushima T."/>
            <person name="Furuno M."/>
            <person name="Futaki S."/>
            <person name="Gariboldi M."/>
            <person name="Georgii-Hemming P."/>
            <person name="Gingeras T.R."/>
            <person name="Gojobori T."/>
            <person name="Green R.E."/>
            <person name="Gustincich S."/>
            <person name="Harbers M."/>
            <person name="Hayashi Y."/>
            <person name="Hensch T.K."/>
            <person name="Hirokawa N."/>
            <person name="Hill D."/>
            <person name="Huminiecki L."/>
            <person name="Iacono M."/>
            <person name="Ikeo K."/>
            <person name="Iwama A."/>
            <person name="Ishikawa T."/>
            <person name="Jakt M."/>
            <person name="Kanapin A."/>
            <person name="Katoh M."/>
            <person name="Kawasawa Y."/>
            <person name="Kelso J."/>
            <person name="Kitamura H."/>
            <person name="Kitano H."/>
            <person name="Kollias G."/>
            <person name="Krishnan S.P."/>
            <person name="Kruger A."/>
            <person name="Kummerfeld S.K."/>
            <person name="Kurochkin I.V."/>
            <person name="Lareau L.F."/>
            <person name="Lazarevic D."/>
            <person name="Lipovich L."/>
            <person name="Liu J."/>
            <person name="Liuni S."/>
            <person name="McWilliam S."/>
            <person name="Madan Babu M."/>
            <person name="Madera M."/>
            <person name="Marchionni L."/>
            <person name="Matsuda H."/>
            <person name="Matsuzawa S."/>
            <person name="Miki H."/>
            <person name="Mignone F."/>
            <person name="Miyake S."/>
            <person name="Morris K."/>
            <person name="Mottagui-Tabar S."/>
            <person name="Mulder N."/>
            <person name="Nakano N."/>
            <person name="Nakauchi H."/>
            <person name="Ng P."/>
            <person name="Nilsson R."/>
            <person name="Nishiguchi S."/>
            <person name="Nishikawa S."/>
            <person name="Nori F."/>
            <person name="Ohara O."/>
            <person name="Okazaki Y."/>
            <person name="Orlando V."/>
            <person name="Pang K.C."/>
            <person name="Pavan W.J."/>
            <person name="Pavesi G."/>
            <person name="Pesole G."/>
            <person name="Petrovsky N."/>
            <person name="Piazza S."/>
            <person name="Reed J."/>
            <person name="Reid J.F."/>
            <person name="Ring B.Z."/>
            <person name="Ringwald M."/>
            <person name="Rost B."/>
            <person name="Ruan Y."/>
            <person name="Salzberg S.L."/>
            <person name="Sandelin A."/>
            <person name="Schneider C."/>
            <person name="Schoenbach C."/>
            <person name="Sekiguchi K."/>
            <person name="Semple C.A."/>
            <person name="Seno S."/>
            <person name="Sessa L."/>
            <person name="Sheng Y."/>
            <person name="Shibata Y."/>
            <person name="Shimada H."/>
            <person name="Shimada K."/>
            <person name="Silva D."/>
            <person name="Sinclair B."/>
            <person name="Sperling S."/>
            <person name="Stupka E."/>
            <person name="Sugiura K."/>
            <person name="Sultana R."/>
            <person name="Takenaka Y."/>
            <person name="Taki K."/>
            <person name="Tammoja K."/>
            <person name="Tan S.L."/>
            <person name="Tang S."/>
            <person name="Taylor M.S."/>
            <person name="Tegner J."/>
            <person name="Teichmann S.A."/>
            <person name="Ueda H.R."/>
            <person name="van Nimwegen E."/>
            <person name="Verardo R."/>
            <person name="Wei C.L."/>
            <person name="Yagi K."/>
            <person name="Yamanishi H."/>
            <person name="Zabarovsky E."/>
            <person name="Zhu S."/>
            <person name="Zimmer A."/>
            <person name="Hide W."/>
            <person name="Bult C."/>
            <person name="Grimmond S.M."/>
            <person name="Teasdale R.D."/>
            <person name="Liu E.T."/>
            <person name="Brusic V."/>
            <person name="Quackenbush J."/>
            <person name="Wahlestedt C."/>
            <person name="Mattick J.S."/>
            <person name="Hume D.A."/>
            <person name="Kai C."/>
            <person name="Sasaki D."/>
            <person name="Tomaru Y."/>
            <person name="Fukuda S."/>
            <person name="Kanamori-Katayama M."/>
            <person name="Suzuki M."/>
            <person name="Aoki J."/>
            <person name="Arakawa T."/>
            <person name="Iida J."/>
            <person name="Imamura K."/>
            <person name="Itoh M."/>
            <person name="Kato T."/>
            <person name="Kawaji H."/>
            <person name="Kawagashira N."/>
            <person name="Kawashima T."/>
            <person name="Kojima M."/>
            <person name="Kondo S."/>
            <person name="Konno H."/>
            <person name="Nakano K."/>
            <person name="Ninomiya N."/>
            <person name="Nishio T."/>
            <person name="Okada M."/>
            <person name="Plessy C."/>
            <person name="Shibata K."/>
            <person name="Shiraki T."/>
            <person name="Suzuki S."/>
            <person name="Tagami M."/>
            <person name="Waki K."/>
            <person name="Watahiki A."/>
            <person name="Okamura-Oho Y."/>
            <person name="Suzuki H."/>
            <person name="Kawai J."/>
            <person name="Hayashizaki Y."/>
        </authorList>
    </citation>
    <scope>NUCLEOTIDE SEQUENCE [LARGE SCALE MRNA] OF 1-488</scope>
    <source>
        <strain>NOD</strain>
        <tissue>Spleen</tissue>
    </source>
</reference>
<reference key="6">
    <citation type="journal article" date="2012" name="Immunity">
        <title>NLRP1 inflammasome activation induces pyroptosis of hematopoietic progenitor cells.</title>
        <authorList>
            <person name="Masters S.L."/>
            <person name="Gerlic M."/>
            <person name="Metcalf D."/>
            <person name="Preston S."/>
            <person name="Pellegrini M."/>
            <person name="O'Donnell J.A."/>
            <person name="McArthur K."/>
            <person name="Baldwin T.M."/>
            <person name="Chevrier S."/>
            <person name="Nowell C.J."/>
            <person name="Cengia L.H."/>
            <person name="Henley K.J."/>
            <person name="Collinge J.E."/>
            <person name="Kastner D.L."/>
            <person name="Feigenbaum L."/>
            <person name="Hilton D.J."/>
            <person name="Alexander W.S."/>
            <person name="Kile B.T."/>
            <person name="Croker B.A."/>
        </authorList>
    </citation>
    <scope>FUNCTION</scope>
    <scope>INVOLVEMENT IN INFLAMMASOME</scope>
    <scope>TISSUE SPECIFICITY</scope>
    <scope>MUTAGENESIS OF GLN-593</scope>
</reference>
<reference key="7">
    <citation type="journal article" date="2019" name="Cell Death Dis.">
        <title>DPP8/9 inhibitors are universal activators of functional NLRP1 alleles.</title>
        <authorList>
            <person name="Gai K."/>
            <person name="Okondo M.C."/>
            <person name="Rao S.D."/>
            <person name="Chui A.J."/>
            <person name="Ball D.P."/>
            <person name="Johnson D.C."/>
            <person name="Bachovchin D.A."/>
        </authorList>
    </citation>
    <scope>ACTIVITY REGULATION</scope>
    <scope>PROTEOLYTIC CLEAVAGE</scope>
</reference>
<proteinExistence type="evidence at protein level"/>
<keyword id="KW-0025">Alternative splicing</keyword>
<keyword id="KW-0067">ATP-binding</keyword>
<keyword id="KW-0963">Cytoplasm</keyword>
<keyword id="KW-0378">Hydrolase</keyword>
<keyword id="KW-0391">Immunity</keyword>
<keyword id="KW-1271">Inflammasome</keyword>
<keyword id="KW-0395">Inflammatory response</keyword>
<keyword id="KW-0399">Innate immunity</keyword>
<keyword id="KW-0433">Leucine-rich repeat</keyword>
<keyword id="KW-1210">Necrosis</keyword>
<keyword id="KW-0547">Nucleotide-binding</keyword>
<keyword id="KW-0539">Nucleus</keyword>
<keyword id="KW-0645">Protease</keyword>
<keyword id="KW-1185">Reference proteome</keyword>
<keyword id="KW-0677">Repeat</keyword>
<keyword id="KW-0832">Ubl conjugation</keyword>
<feature type="chain" id="PRO_0000435102" description="NACHT, LRR and PYD domains-containing protein 1a">
    <location>
        <begin position="1"/>
        <end position="1182"/>
    </location>
</feature>
<feature type="chain" id="PRO_0000452853" description="NACHT, LRR and PYD domains-containing protein 1a, N-terminus" evidence="2">
    <location>
        <begin position="1"/>
        <end position="932"/>
    </location>
</feature>
<feature type="chain" id="PRO_0000452854" description="NACHT, LRR and PYD domains-containing protein 1a, C-terminus" evidence="2">
    <location>
        <begin position="933"/>
        <end position="1182"/>
    </location>
</feature>
<feature type="domain" description="NACHT" evidence="4">
    <location>
        <begin position="133"/>
        <end position="442"/>
    </location>
</feature>
<feature type="repeat" description="LRR 1">
    <location>
        <begin position="634"/>
        <end position="655"/>
    </location>
</feature>
<feature type="repeat" description="LRR 2">
    <location>
        <begin position="691"/>
        <end position="711"/>
    </location>
</feature>
<feature type="repeat" description="LRR 3">
    <location>
        <begin position="720"/>
        <end position="743"/>
    </location>
</feature>
<feature type="domain" description="FIIND" evidence="5">
    <location>
        <begin position="799"/>
        <end position="1082"/>
    </location>
</feature>
<feature type="domain" description="CARD" evidence="3">
    <location>
        <begin position="1092"/>
        <end position="1175"/>
    </location>
</feature>
<feature type="region of interest" description="Disordered" evidence="6">
    <location>
        <begin position="1"/>
        <end position="23"/>
    </location>
</feature>
<feature type="region of interest" description="Disordered" evidence="6">
    <location>
        <begin position="780"/>
        <end position="806"/>
    </location>
</feature>
<feature type="region of interest" description="ZU5" evidence="2">
    <location>
        <begin position="799"/>
        <end position="932"/>
    </location>
</feature>
<feature type="region of interest" description="UPA" evidence="2">
    <location>
        <begin position="933"/>
        <end position="1082"/>
    </location>
</feature>
<feature type="binding site" evidence="4">
    <location>
        <begin position="139"/>
        <end position="146"/>
    </location>
    <ligand>
        <name>ATP</name>
        <dbReference type="ChEBI" id="CHEBI:30616"/>
    </ligand>
</feature>
<feature type="site" description="Trigger for autolytic processing" evidence="2">
    <location>
        <position position="906"/>
    </location>
</feature>
<feature type="site" description="Cleavage; by autolysis" evidence="2 5">
    <location>
        <begin position="932"/>
        <end position="933"/>
    </location>
</feature>
<feature type="splice variant" id="VSP_058002" description="In isoform 2.">
    <original>W</original>
    <variation>CTLPEDMNKAEVKNTEAKGSLGEKAPGPRNDIFPFPPAHCPYNQTSTSEHLPCR</variation>
    <location>
        <position position="668"/>
    </location>
</feature>
<feature type="splice variant" id="VSP_058003" description="In isoform 2.">
    <original>S</original>
    <variation>SGMVGWLLKEDNVKKIKQNATNTYAHTHTHTHAELVPLKTFHPCSPVSP</variation>
    <location>
        <position position="785"/>
    </location>
</feature>
<feature type="splice variant" id="VSP_058004" description="In isoform 2.">
    <original>DLRPALPKIATAPK</original>
    <variation>KISLRPETLRVEERDTKGAFLCSFPVSSLSL</variation>
    <location>
        <begin position="1072"/>
        <end position="1085"/>
    </location>
</feature>
<feature type="sequence variant" description="In strain: CAST/EiJ." evidence="8">
    <original>E</original>
    <variation>K</variation>
    <location>
        <position position="3"/>
    </location>
</feature>
<feature type="sequence variant" description="In strain: PWK/PhJ." evidence="8">
    <original>F</original>
    <variation>Y</variation>
    <location>
        <position position="88"/>
    </location>
</feature>
<feature type="sequence variant" description="In strain: CAST/EiJ, DBA/2J and PWK/PhJ." evidence="8">
    <original>E</original>
    <variation>G</variation>
    <location>
        <position position="112"/>
    </location>
</feature>
<feature type="sequence variant" description="In strain: PWK/PhJ." evidence="8">
    <original>Q</original>
    <variation>R</variation>
    <location>
        <position position="227"/>
    </location>
</feature>
<feature type="sequence variant" description="In strain: CAST/EiJ, DBA/2J and PWK/PhJ." evidence="8">
    <original>G</original>
    <variation>E</variation>
    <location>
        <position position="256"/>
    </location>
</feature>
<feature type="sequence variant" description="In strain: DBA/2J." evidence="8">
    <original>R</original>
    <variation>Q</variation>
    <location>
        <position position="291"/>
    </location>
</feature>
<feature type="sequence variant" description="In strain: PWK/PhJ." evidence="8">
    <original>K</original>
    <variation>N</variation>
    <location>
        <position position="337"/>
    </location>
</feature>
<feature type="sequence variant" description="In strain: DBA/2J and CAST/EiJ." evidence="8">
    <original>S</original>
    <variation>G</variation>
    <location>
        <position position="484"/>
    </location>
</feature>
<feature type="sequence variant" description="In strain: PWK/PhJ." evidence="8">
    <original>V</original>
    <variation>M</variation>
    <location>
        <position position="541"/>
    </location>
</feature>
<feature type="sequence variant" description="In strain: AKR/J." evidence="8">
    <original>R</original>
    <variation>H</variation>
    <location>
        <position position="660"/>
    </location>
</feature>
<feature type="sequence variant" description="In strain: PWK/PhJ." evidence="8">
    <original>L</original>
    <variation>I</variation>
    <location>
        <position position="664"/>
    </location>
</feature>
<feature type="sequence variant" description="In strain: DBA/2J." evidence="8">
    <original>G</original>
    <variation>D</variation>
    <location>
        <position position="705"/>
    </location>
</feature>
<feature type="sequence variant" description="In strain: PWK/PhJ." evidence="8">
    <original>D</original>
    <variation>N</variation>
    <location>
        <position position="857"/>
    </location>
</feature>
<feature type="sequence variant" description="In strain: PWK/PhJ." evidence="8">
    <original>N</original>
    <variation>S</variation>
    <location>
        <position position="975"/>
    </location>
</feature>
<feature type="sequence variant" description="In strain: DBA/2J." evidence="8">
    <original>R</original>
    <variation>Q</variation>
    <location>
        <position position="1030"/>
    </location>
</feature>
<feature type="sequence variant" description="In strain: CAST/EiJ." evidence="8">
    <original>I</original>
    <variation>F</variation>
    <location>
        <position position="1043"/>
    </location>
</feature>
<feature type="sequence variant" description="In strain: DBA/2J." evidence="8">
    <original>P</original>
    <variation>S</variation>
    <location>
        <position position="1110"/>
    </location>
</feature>
<feature type="sequence variant" description="In strain: CAST/EiJ and DBA/2J." evidence="8">
    <original>K</original>
    <variation>R</variation>
    <location>
        <position position="1181"/>
    </location>
</feature>
<feature type="mutagenesis site" description="Constitutively active in IL1B release. In conventional housing conditions, mice bearing this mutation develop a systemic inflammatory phenotype associated with elevated IL1B and IL18 levels at 3-5 months of age. In a germ-free environment, they exhibit neutrophilia and myocarditis." evidence="7">
    <original>Q</original>
    <variation>P</variation>
    <location>
        <position position="593"/>
    </location>
</feature>
<feature type="sequence conflict" description="In Ref. 5; BAE33940." evidence="11" ref="5">
    <original>N</original>
    <variation>D</variation>
    <location>
        <position position="228"/>
    </location>
</feature>